<protein>
    <recommendedName>
        <fullName evidence="1">Protein-arginine kinase</fullName>
        <ecNumber evidence="1">2.7.14.1</ecNumber>
    </recommendedName>
</protein>
<accession>Q2FJB6</accession>
<keyword id="KW-0067">ATP-binding</keyword>
<keyword id="KW-0418">Kinase</keyword>
<keyword id="KW-0547">Nucleotide-binding</keyword>
<keyword id="KW-0808">Transferase</keyword>
<gene>
    <name evidence="1" type="primary">mcsB</name>
    <name type="ordered locus">SAUSA300_0509</name>
</gene>
<comment type="function">
    <text evidence="1">Catalyzes the specific phosphorylation of arginine residues in proteins.</text>
</comment>
<comment type="catalytic activity">
    <reaction evidence="1">
        <text>L-arginyl-[protein] + ATP = N(omega)-phospho-L-arginyl-[protein] + ADP + H(+)</text>
        <dbReference type="Rhea" id="RHEA:43384"/>
        <dbReference type="Rhea" id="RHEA-COMP:10532"/>
        <dbReference type="Rhea" id="RHEA-COMP:10533"/>
        <dbReference type="ChEBI" id="CHEBI:15378"/>
        <dbReference type="ChEBI" id="CHEBI:29965"/>
        <dbReference type="ChEBI" id="CHEBI:30616"/>
        <dbReference type="ChEBI" id="CHEBI:83226"/>
        <dbReference type="ChEBI" id="CHEBI:456216"/>
        <dbReference type="EC" id="2.7.14.1"/>
    </reaction>
</comment>
<comment type="similarity">
    <text evidence="1">Belongs to the ATP:guanido phosphotransferase family.</text>
</comment>
<proteinExistence type="inferred from homology"/>
<dbReference type="EC" id="2.7.14.1" evidence="1"/>
<dbReference type="EMBL" id="CP000255">
    <property type="protein sequence ID" value="ABD20526.1"/>
    <property type="molecule type" value="Genomic_DNA"/>
</dbReference>
<dbReference type="RefSeq" id="WP_000149503.1">
    <property type="nucleotide sequence ID" value="NZ_CP027476.1"/>
</dbReference>
<dbReference type="SMR" id="Q2FJB6"/>
<dbReference type="KEGG" id="saa:SAUSA300_0509"/>
<dbReference type="HOGENOM" id="CLU_066591_1_0_9"/>
<dbReference type="OMA" id="WGYLTSC"/>
<dbReference type="Proteomes" id="UP000001939">
    <property type="component" value="Chromosome"/>
</dbReference>
<dbReference type="GO" id="GO:0005615">
    <property type="term" value="C:extracellular space"/>
    <property type="evidence" value="ECO:0007669"/>
    <property type="project" value="TreeGrafter"/>
</dbReference>
<dbReference type="GO" id="GO:0005524">
    <property type="term" value="F:ATP binding"/>
    <property type="evidence" value="ECO:0007669"/>
    <property type="project" value="UniProtKB-KW"/>
</dbReference>
<dbReference type="GO" id="GO:0004111">
    <property type="term" value="F:creatine kinase activity"/>
    <property type="evidence" value="ECO:0007669"/>
    <property type="project" value="InterPro"/>
</dbReference>
<dbReference type="GO" id="GO:0004672">
    <property type="term" value="F:protein kinase activity"/>
    <property type="evidence" value="ECO:0007669"/>
    <property type="project" value="UniProtKB-UniRule"/>
</dbReference>
<dbReference type="GO" id="GO:0046314">
    <property type="term" value="P:phosphocreatine biosynthetic process"/>
    <property type="evidence" value="ECO:0007669"/>
    <property type="project" value="InterPro"/>
</dbReference>
<dbReference type="CDD" id="cd07930">
    <property type="entry name" value="bacterial_phosphagen_kinase"/>
    <property type="match status" value="1"/>
</dbReference>
<dbReference type="FunFam" id="3.30.590.10:FF:000007">
    <property type="entry name" value="Protein-arginine kinase"/>
    <property type="match status" value="1"/>
</dbReference>
<dbReference type="Gene3D" id="3.30.590.10">
    <property type="entry name" value="Glutamine synthetase/guanido kinase, catalytic domain"/>
    <property type="match status" value="1"/>
</dbReference>
<dbReference type="HAMAP" id="MF_00602">
    <property type="entry name" value="Prot_Arg_kinase"/>
    <property type="match status" value="1"/>
</dbReference>
<dbReference type="InterPro" id="IPR023660">
    <property type="entry name" value="Arg_Kinase"/>
</dbReference>
<dbReference type="InterPro" id="IPR000749">
    <property type="entry name" value="ATP-guanido_PTrfase"/>
</dbReference>
<dbReference type="InterPro" id="IPR022415">
    <property type="entry name" value="ATP-guanido_PTrfase_AS"/>
</dbReference>
<dbReference type="InterPro" id="IPR022414">
    <property type="entry name" value="ATP-guanido_PTrfase_cat"/>
</dbReference>
<dbReference type="InterPro" id="IPR014746">
    <property type="entry name" value="Gln_synth/guanido_kin_cat_dom"/>
</dbReference>
<dbReference type="NCBIfam" id="NF002193">
    <property type="entry name" value="PRK01059.1-3"/>
    <property type="match status" value="1"/>
</dbReference>
<dbReference type="PANTHER" id="PTHR11547:SF38">
    <property type="entry name" value="ARGININE KINASE 1-RELATED"/>
    <property type="match status" value="1"/>
</dbReference>
<dbReference type="PANTHER" id="PTHR11547">
    <property type="entry name" value="ARGININE OR CREATINE KINASE"/>
    <property type="match status" value="1"/>
</dbReference>
<dbReference type="Pfam" id="PF00217">
    <property type="entry name" value="ATP-gua_Ptrans"/>
    <property type="match status" value="1"/>
</dbReference>
<dbReference type="SUPFAM" id="SSF55931">
    <property type="entry name" value="Glutamine synthetase/guanido kinase"/>
    <property type="match status" value="1"/>
</dbReference>
<dbReference type="PROSITE" id="PS00112">
    <property type="entry name" value="PHOSPHAGEN_KINASE"/>
    <property type="match status" value="1"/>
</dbReference>
<dbReference type="PROSITE" id="PS51510">
    <property type="entry name" value="PHOSPHAGEN_KINASE_C"/>
    <property type="match status" value="1"/>
</dbReference>
<organism>
    <name type="scientific">Staphylococcus aureus (strain USA300)</name>
    <dbReference type="NCBI Taxonomy" id="367830"/>
    <lineage>
        <taxon>Bacteria</taxon>
        <taxon>Bacillati</taxon>
        <taxon>Bacillota</taxon>
        <taxon>Bacilli</taxon>
        <taxon>Bacillales</taxon>
        <taxon>Staphylococcaceae</taxon>
        <taxon>Staphylococcus</taxon>
    </lineage>
</organism>
<sequence length="335" mass="38610">MTHNIHDNISQWMKSNEETPIVMSSRIRLARNLENHVHPLMYATENDGFRVINEVQDALPNFELMRLDQMDQQSKMKMVAKHLISPELIKQPAAAVLVNDDESLSVMINEEDHIRIQAMGTDTTLQALYNQASSIDDELDRSLDISYDEQLGYLTTCPTNIGTGMRASVMLHLPGLSIMKRMTRIAQTINRFGYTIRGIYGEGSQVYGHTYQVSNQLTLGKSELEIIETLTEVVNQIIHEEKQIRQKLDTYNQLETQDRVFRSLGILQNCRMITMEEASYRLSEVKLGIDLNYIELQNFKFNELMVAIQSPFLLDEEDDKSVKEKRADILREHIK</sequence>
<evidence type="ECO:0000255" key="1">
    <source>
        <dbReference type="HAMAP-Rule" id="MF_00602"/>
    </source>
</evidence>
<feature type="chain" id="PRO_1000025878" description="Protein-arginine kinase">
    <location>
        <begin position="1"/>
        <end position="335"/>
    </location>
</feature>
<feature type="domain" description="Phosphagen kinase C-terminal" evidence="1">
    <location>
        <begin position="21"/>
        <end position="244"/>
    </location>
</feature>
<feature type="binding site" evidence="1">
    <location>
        <begin position="24"/>
        <end position="28"/>
    </location>
    <ligand>
        <name>ATP</name>
        <dbReference type="ChEBI" id="CHEBI:30616"/>
    </ligand>
</feature>
<feature type="binding site" evidence="1">
    <location>
        <position position="82"/>
    </location>
    <ligand>
        <name>ATP</name>
        <dbReference type="ChEBI" id="CHEBI:30616"/>
    </ligand>
</feature>
<feature type="binding site" evidence="1">
    <location>
        <position position="115"/>
    </location>
    <ligand>
        <name>ATP</name>
        <dbReference type="ChEBI" id="CHEBI:30616"/>
    </ligand>
</feature>
<feature type="binding site" evidence="1">
    <location>
        <begin position="166"/>
        <end position="170"/>
    </location>
    <ligand>
        <name>ATP</name>
        <dbReference type="ChEBI" id="CHEBI:30616"/>
    </ligand>
</feature>
<feature type="binding site" evidence="1">
    <location>
        <begin position="197"/>
        <end position="202"/>
    </location>
    <ligand>
        <name>ATP</name>
        <dbReference type="ChEBI" id="CHEBI:30616"/>
    </ligand>
</feature>
<reference key="1">
    <citation type="journal article" date="2006" name="Lancet">
        <title>Complete genome sequence of USA300, an epidemic clone of community-acquired meticillin-resistant Staphylococcus aureus.</title>
        <authorList>
            <person name="Diep B.A."/>
            <person name="Gill S.R."/>
            <person name="Chang R.F."/>
            <person name="Phan T.H."/>
            <person name="Chen J.H."/>
            <person name="Davidson M.G."/>
            <person name="Lin F."/>
            <person name="Lin J."/>
            <person name="Carleton H.A."/>
            <person name="Mongodin E.F."/>
            <person name="Sensabaugh G.F."/>
            <person name="Perdreau-Remington F."/>
        </authorList>
    </citation>
    <scope>NUCLEOTIDE SEQUENCE [LARGE SCALE GENOMIC DNA]</scope>
    <source>
        <strain>USA300</strain>
    </source>
</reference>
<name>MCSB_STAA3</name>